<reference key="1">
    <citation type="journal article" date="2001" name="J. Bacteriol.">
        <title>Genome of the bacterium Streptococcus pneumoniae strain R6.</title>
        <authorList>
            <person name="Hoskins J."/>
            <person name="Alborn W.E. Jr."/>
            <person name="Arnold J."/>
            <person name="Blaszczak L.C."/>
            <person name="Burgett S."/>
            <person name="DeHoff B.S."/>
            <person name="Estrem S.T."/>
            <person name="Fritz L."/>
            <person name="Fu D.-J."/>
            <person name="Fuller W."/>
            <person name="Geringer C."/>
            <person name="Gilmour R."/>
            <person name="Glass J.S."/>
            <person name="Khoja H."/>
            <person name="Kraft A.R."/>
            <person name="Lagace R.E."/>
            <person name="LeBlanc D.J."/>
            <person name="Lee L.N."/>
            <person name="Lefkowitz E.J."/>
            <person name="Lu J."/>
            <person name="Matsushima P."/>
            <person name="McAhren S.M."/>
            <person name="McHenney M."/>
            <person name="McLeaster K."/>
            <person name="Mundy C.W."/>
            <person name="Nicas T.I."/>
            <person name="Norris F.H."/>
            <person name="O'Gara M."/>
            <person name="Peery R.B."/>
            <person name="Robertson G.T."/>
            <person name="Rockey P."/>
            <person name="Sun P.-M."/>
            <person name="Winkler M.E."/>
            <person name="Yang Y."/>
            <person name="Young-Bellido M."/>
            <person name="Zhao G."/>
            <person name="Zook C.A."/>
            <person name="Baltz R.H."/>
            <person name="Jaskunas S.R."/>
            <person name="Rosteck P.R. Jr."/>
            <person name="Skatrud P.L."/>
            <person name="Glass J.I."/>
        </authorList>
    </citation>
    <scope>NUCLEOTIDE SEQUENCE [LARGE SCALE GENOMIC DNA]</scope>
    <source>
        <strain>ATCC BAA-255 / R6</strain>
    </source>
</reference>
<gene>
    <name evidence="1" type="primary">groEL</name>
    <name evidence="1" type="synonym">groL</name>
    <name type="ordered locus">spr1722</name>
</gene>
<evidence type="ECO:0000255" key="1">
    <source>
        <dbReference type="HAMAP-Rule" id="MF_00600"/>
    </source>
</evidence>
<proteinExistence type="inferred from homology"/>
<organism>
    <name type="scientific">Streptococcus pneumoniae (strain ATCC BAA-255 / R6)</name>
    <dbReference type="NCBI Taxonomy" id="171101"/>
    <lineage>
        <taxon>Bacteria</taxon>
        <taxon>Bacillati</taxon>
        <taxon>Bacillota</taxon>
        <taxon>Bacilli</taxon>
        <taxon>Lactobacillales</taxon>
        <taxon>Streptococcaceae</taxon>
        <taxon>Streptococcus</taxon>
    </lineage>
</organism>
<keyword id="KW-0067">ATP-binding</keyword>
<keyword id="KW-0143">Chaperone</keyword>
<keyword id="KW-0963">Cytoplasm</keyword>
<keyword id="KW-0413">Isomerase</keyword>
<keyword id="KW-0547">Nucleotide-binding</keyword>
<keyword id="KW-1185">Reference proteome</keyword>
<name>CH60_STRR6</name>
<feature type="chain" id="PRO_0000063557" description="Chaperonin GroEL">
    <location>
        <begin position="1"/>
        <end position="540"/>
    </location>
</feature>
<feature type="binding site" evidence="1">
    <location>
        <begin position="29"/>
        <end position="32"/>
    </location>
    <ligand>
        <name>ATP</name>
        <dbReference type="ChEBI" id="CHEBI:30616"/>
    </ligand>
</feature>
<feature type="binding site" evidence="1">
    <location>
        <begin position="86"/>
        <end position="90"/>
    </location>
    <ligand>
        <name>ATP</name>
        <dbReference type="ChEBI" id="CHEBI:30616"/>
    </ligand>
</feature>
<feature type="binding site" evidence="1">
    <location>
        <position position="413"/>
    </location>
    <ligand>
        <name>ATP</name>
        <dbReference type="ChEBI" id="CHEBI:30616"/>
    </ligand>
</feature>
<feature type="binding site" evidence="1">
    <location>
        <begin position="476"/>
        <end position="478"/>
    </location>
    <ligand>
        <name>ATP</name>
        <dbReference type="ChEBI" id="CHEBI:30616"/>
    </ligand>
</feature>
<feature type="binding site" evidence="1">
    <location>
        <position position="492"/>
    </location>
    <ligand>
        <name>ATP</name>
        <dbReference type="ChEBI" id="CHEBI:30616"/>
    </ligand>
</feature>
<comment type="function">
    <text evidence="1">Together with its co-chaperonin GroES, plays an essential role in assisting protein folding. The GroEL-GroES system forms a nano-cage that allows encapsulation of the non-native substrate proteins and provides a physical environment optimized to promote and accelerate protein folding.</text>
</comment>
<comment type="catalytic activity">
    <reaction evidence="1">
        <text>ATP + H2O + a folded polypeptide = ADP + phosphate + an unfolded polypeptide.</text>
        <dbReference type="EC" id="5.6.1.7"/>
    </reaction>
</comment>
<comment type="subunit">
    <text evidence="1">Forms a cylinder of 14 subunits composed of two heptameric rings stacked back-to-back. Interacts with the co-chaperonin GroES.</text>
</comment>
<comment type="subcellular location">
    <subcellularLocation>
        <location evidence="1">Cytoplasm</location>
    </subcellularLocation>
</comment>
<comment type="similarity">
    <text evidence="1">Belongs to the chaperonin (HSP60) family.</text>
</comment>
<protein>
    <recommendedName>
        <fullName evidence="1">Chaperonin GroEL</fullName>
        <ecNumber evidence="1">5.6.1.7</ecNumber>
    </recommendedName>
    <alternativeName>
        <fullName evidence="1">60 kDa chaperonin</fullName>
    </alternativeName>
    <alternativeName>
        <fullName evidence="1">Chaperonin-60</fullName>
        <shortName evidence="1">Cpn60</shortName>
    </alternativeName>
</protein>
<accession>P0A336</accession>
<accession>Q97NV4</accession>
<dbReference type="EC" id="5.6.1.7" evidence="1"/>
<dbReference type="EMBL" id="AE007317">
    <property type="protein sequence ID" value="AAL00525.1"/>
    <property type="molecule type" value="Genomic_DNA"/>
</dbReference>
<dbReference type="PIR" id="H98086">
    <property type="entry name" value="H98086"/>
</dbReference>
<dbReference type="RefSeq" id="NP_359314.1">
    <property type="nucleotide sequence ID" value="NC_003098.1"/>
</dbReference>
<dbReference type="RefSeq" id="WP_000031573.1">
    <property type="nucleotide sequence ID" value="NC_003098.1"/>
</dbReference>
<dbReference type="SMR" id="P0A336"/>
<dbReference type="STRING" id="171101.spr1722"/>
<dbReference type="GeneID" id="45652869"/>
<dbReference type="KEGG" id="spr:spr1722"/>
<dbReference type="PATRIC" id="fig|171101.6.peg.1862"/>
<dbReference type="eggNOG" id="COG0459">
    <property type="taxonomic scope" value="Bacteria"/>
</dbReference>
<dbReference type="HOGENOM" id="CLU_016503_3_0_9"/>
<dbReference type="Proteomes" id="UP000000586">
    <property type="component" value="Chromosome"/>
</dbReference>
<dbReference type="GO" id="GO:1990220">
    <property type="term" value="C:GroEL-GroES complex"/>
    <property type="evidence" value="ECO:0000318"/>
    <property type="project" value="GO_Central"/>
</dbReference>
<dbReference type="GO" id="GO:0005524">
    <property type="term" value="F:ATP binding"/>
    <property type="evidence" value="ECO:0000318"/>
    <property type="project" value="GO_Central"/>
</dbReference>
<dbReference type="GO" id="GO:0140662">
    <property type="term" value="F:ATP-dependent protein folding chaperone"/>
    <property type="evidence" value="ECO:0007669"/>
    <property type="project" value="InterPro"/>
</dbReference>
<dbReference type="GO" id="GO:0016853">
    <property type="term" value="F:isomerase activity"/>
    <property type="evidence" value="ECO:0007669"/>
    <property type="project" value="UniProtKB-KW"/>
</dbReference>
<dbReference type="GO" id="GO:0051082">
    <property type="term" value="F:unfolded protein binding"/>
    <property type="evidence" value="ECO:0000318"/>
    <property type="project" value="GO_Central"/>
</dbReference>
<dbReference type="GO" id="GO:0051085">
    <property type="term" value="P:chaperone cofactor-dependent protein refolding"/>
    <property type="evidence" value="ECO:0000318"/>
    <property type="project" value="GO_Central"/>
</dbReference>
<dbReference type="GO" id="GO:0042026">
    <property type="term" value="P:protein refolding"/>
    <property type="evidence" value="ECO:0007669"/>
    <property type="project" value="UniProtKB-UniRule"/>
</dbReference>
<dbReference type="GO" id="GO:0009408">
    <property type="term" value="P:response to heat"/>
    <property type="evidence" value="ECO:0000318"/>
    <property type="project" value="GO_Central"/>
</dbReference>
<dbReference type="CDD" id="cd03344">
    <property type="entry name" value="GroEL"/>
    <property type="match status" value="1"/>
</dbReference>
<dbReference type="FunFam" id="1.10.560.10:FF:000001">
    <property type="entry name" value="60 kDa chaperonin"/>
    <property type="match status" value="1"/>
</dbReference>
<dbReference type="FunFam" id="3.50.7.10:FF:000001">
    <property type="entry name" value="60 kDa chaperonin"/>
    <property type="match status" value="1"/>
</dbReference>
<dbReference type="Gene3D" id="3.50.7.10">
    <property type="entry name" value="GroEL"/>
    <property type="match status" value="1"/>
</dbReference>
<dbReference type="Gene3D" id="1.10.560.10">
    <property type="entry name" value="GroEL-like equatorial domain"/>
    <property type="match status" value="1"/>
</dbReference>
<dbReference type="Gene3D" id="3.30.260.10">
    <property type="entry name" value="TCP-1-like chaperonin intermediate domain"/>
    <property type="match status" value="1"/>
</dbReference>
<dbReference type="HAMAP" id="MF_00600">
    <property type="entry name" value="CH60"/>
    <property type="match status" value="1"/>
</dbReference>
<dbReference type="InterPro" id="IPR018370">
    <property type="entry name" value="Chaperonin_Cpn60_CS"/>
</dbReference>
<dbReference type="InterPro" id="IPR001844">
    <property type="entry name" value="Cpn60/GroEL"/>
</dbReference>
<dbReference type="InterPro" id="IPR002423">
    <property type="entry name" value="Cpn60/GroEL/TCP-1"/>
</dbReference>
<dbReference type="InterPro" id="IPR027409">
    <property type="entry name" value="GroEL-like_apical_dom_sf"/>
</dbReference>
<dbReference type="InterPro" id="IPR027413">
    <property type="entry name" value="GROEL-like_equatorial_sf"/>
</dbReference>
<dbReference type="InterPro" id="IPR027410">
    <property type="entry name" value="TCP-1-like_intermed_sf"/>
</dbReference>
<dbReference type="NCBIfam" id="TIGR02348">
    <property type="entry name" value="GroEL"/>
    <property type="match status" value="1"/>
</dbReference>
<dbReference type="NCBIfam" id="NF000592">
    <property type="entry name" value="PRK00013.1"/>
    <property type="match status" value="1"/>
</dbReference>
<dbReference type="NCBIfam" id="NF009487">
    <property type="entry name" value="PRK12849.1"/>
    <property type="match status" value="1"/>
</dbReference>
<dbReference type="NCBIfam" id="NF009488">
    <property type="entry name" value="PRK12850.1"/>
    <property type="match status" value="1"/>
</dbReference>
<dbReference type="NCBIfam" id="NF009489">
    <property type="entry name" value="PRK12851.1"/>
    <property type="match status" value="1"/>
</dbReference>
<dbReference type="PANTHER" id="PTHR45633">
    <property type="entry name" value="60 KDA HEAT SHOCK PROTEIN, MITOCHONDRIAL"/>
    <property type="match status" value="1"/>
</dbReference>
<dbReference type="Pfam" id="PF00118">
    <property type="entry name" value="Cpn60_TCP1"/>
    <property type="match status" value="1"/>
</dbReference>
<dbReference type="PRINTS" id="PR00298">
    <property type="entry name" value="CHAPERONIN60"/>
</dbReference>
<dbReference type="SUPFAM" id="SSF52029">
    <property type="entry name" value="GroEL apical domain-like"/>
    <property type="match status" value="1"/>
</dbReference>
<dbReference type="SUPFAM" id="SSF48592">
    <property type="entry name" value="GroEL equatorial domain-like"/>
    <property type="match status" value="1"/>
</dbReference>
<dbReference type="SUPFAM" id="SSF54849">
    <property type="entry name" value="GroEL-intermediate domain like"/>
    <property type="match status" value="1"/>
</dbReference>
<dbReference type="PROSITE" id="PS00296">
    <property type="entry name" value="CHAPERONINS_CPN60"/>
    <property type="match status" value="1"/>
</dbReference>
<sequence>MSKEIKFSSDARSAMVRGVDILADTVKVTLGPKGRNVVLEKSFGSPLITNDGVTIAKEIELEDHFENMGAKLVSEVASKTNDIAGDGTTTATVLTQAIVREGIKNVTAGANPIGIRRGIETAVAAAVEALKNNAIPVANKEAIAQVAAVSSRSEKVGEYISEAMEKVGKDGVITIEESRGMETELEVVEGMQFDRGYLSQYMVTDSEKMVADLENPYILITDKKISNIQEILPLLESILQSNRPLLIIADDVDGEALPTLVLNKIRGTFNVVAVKAPGFGDRRKAMLEDIAILTGGTVITEDLGLELKDATIEALGQAARVTVDKDSTVIVEGAGNPEAISHRVAVIKSQIETTTSEFDREKLQERLAKLSGGVAVIKVGAATETELKEMKLRIEDALNATRAAVEEGIVAGGGTALANVIPAVATLELTGDEATGRNIVLRALEEPVRQIAHNAGFEGSIVIDRLKNAELGIGFNAATGEWVNMIDQGIIDPVKVSRSALQNAASVASLILTTEAVVANKPEPVAPAPAMDPSMMGGMM</sequence>